<accession>Q04302</accession>
<comment type="function">
    <text evidence="1">Exerts its effect at some terminal stage of cytochrome c oxidase synthesis, probably by being involved in the insertion of the copper B into subunit I.</text>
</comment>
<comment type="subcellular location">
    <subcellularLocation>
        <location evidence="3">Cell inner membrane</location>
        <topology evidence="3">Single-pass type II membrane protein</topology>
        <orientation evidence="3">Periplasmic side</orientation>
    </subcellularLocation>
</comment>
<comment type="similarity">
    <text evidence="3">Belongs to the COX11/CtaG family.</text>
</comment>
<keyword id="KW-0997">Cell inner membrane</keyword>
<keyword id="KW-1003">Cell membrane</keyword>
<keyword id="KW-0186">Copper</keyword>
<keyword id="KW-0472">Membrane</keyword>
<keyword id="KW-0735">Signal-anchor</keyword>
<keyword id="KW-0812">Transmembrane</keyword>
<keyword id="KW-1133">Transmembrane helix</keyword>
<protein>
    <recommendedName>
        <fullName>Cytochrome c oxidase assembly protein CtaG</fullName>
    </recommendedName>
</protein>
<name>COXZ_EHRRU</name>
<sequence>MTQKAKNTIYLLILIILSMLCLVYASVPLYSIFCKVTGYGGTVRTTTVTQSKLGKTTIKIRFNADINKELPWKFYPEIPYTTVKPGEQKLIFYRAENLTNEYVSGMAVYNVTPYKVGKYFNKVACFCFTKQTLSPYQKTIMPVSFFIDQVYIN</sequence>
<reference key="1">
    <citation type="journal article" date="1991" name="J. Clin. Microbiol.">
        <title>A cloned DNA probe identifies Cowdria ruminantium in Amblyomma variegatum ticks.</title>
        <authorList>
            <person name="Waghela S.D."/>
            <person name="Rurangirwa F.R."/>
            <person name="Mahan S.M."/>
            <person name="Yunker C.E."/>
            <person name="Crawford T.B."/>
            <person name="Barbet A.F."/>
            <person name="Burridge M.J."/>
            <person name="McGuire T.C."/>
        </authorList>
    </citation>
    <scope>NUCLEOTIDE SEQUENCE [GENOMIC DNA]</scope>
    <source>
        <strain>Crystal springs</strain>
    </source>
</reference>
<dbReference type="EMBL" id="X58242">
    <property type="protein sequence ID" value="CAA41197.1"/>
    <property type="molecule type" value="Genomic_DNA"/>
</dbReference>
<dbReference type="PIR" id="I40883">
    <property type="entry name" value="I40883"/>
</dbReference>
<dbReference type="SMR" id="Q04302"/>
<dbReference type="STRING" id="779.GCA_002019755_00912"/>
<dbReference type="GO" id="GO:0005886">
    <property type="term" value="C:plasma membrane"/>
    <property type="evidence" value="ECO:0007669"/>
    <property type="project" value="UniProtKB-SubCell"/>
</dbReference>
<dbReference type="GO" id="GO:0005507">
    <property type="term" value="F:copper ion binding"/>
    <property type="evidence" value="ECO:0007669"/>
    <property type="project" value="InterPro"/>
</dbReference>
<dbReference type="GO" id="GO:0008535">
    <property type="term" value="P:respiratory chain complex IV assembly"/>
    <property type="evidence" value="ECO:0007669"/>
    <property type="project" value="UniProtKB-UniRule"/>
</dbReference>
<dbReference type="Gene3D" id="2.60.370.10">
    <property type="entry name" value="Ctag/Cox11"/>
    <property type="match status" value="1"/>
</dbReference>
<dbReference type="HAMAP" id="MF_00155">
    <property type="entry name" value="CtaG"/>
    <property type="match status" value="1"/>
</dbReference>
<dbReference type="InterPro" id="IPR023471">
    <property type="entry name" value="CtaG/Cox11_dom_sf"/>
</dbReference>
<dbReference type="InterPro" id="IPR007533">
    <property type="entry name" value="Cyt_c_oxidase_assmbl_CtaG"/>
</dbReference>
<dbReference type="NCBIfam" id="NF003465">
    <property type="entry name" value="PRK05089.1"/>
    <property type="match status" value="1"/>
</dbReference>
<dbReference type="PANTHER" id="PTHR21320:SF3">
    <property type="entry name" value="CYTOCHROME C OXIDASE ASSEMBLY PROTEIN COX11, MITOCHONDRIAL-RELATED"/>
    <property type="match status" value="1"/>
</dbReference>
<dbReference type="PANTHER" id="PTHR21320">
    <property type="entry name" value="CYTOCHROME C OXIDASE ASSEMBLY PROTEIN COX11-RELATED"/>
    <property type="match status" value="1"/>
</dbReference>
<dbReference type="Pfam" id="PF04442">
    <property type="entry name" value="CtaG_Cox11"/>
    <property type="match status" value="1"/>
</dbReference>
<dbReference type="PIRSF" id="PIRSF005413">
    <property type="entry name" value="COX11"/>
    <property type="match status" value="1"/>
</dbReference>
<dbReference type="SUPFAM" id="SSF110111">
    <property type="entry name" value="Ctag/Cox11"/>
    <property type="match status" value="1"/>
</dbReference>
<feature type="chain" id="PRO_0000206035" description="Cytochrome c oxidase assembly protein CtaG">
    <location>
        <begin position="1"/>
        <end position="153"/>
    </location>
</feature>
<feature type="topological domain" description="Cytoplasmic" evidence="2">
    <location>
        <begin position="1"/>
        <end position="8"/>
    </location>
</feature>
<feature type="transmembrane region" description="Helical; Signal-anchor for type II membrane protein" evidence="2">
    <location>
        <begin position="9"/>
        <end position="29"/>
    </location>
</feature>
<feature type="topological domain" description="Periplasmic" evidence="2">
    <location>
        <begin position="30"/>
        <end position="153"/>
    </location>
</feature>
<organism>
    <name type="scientific">Ehrlichia ruminantium</name>
    <name type="common">Cowdria ruminantium</name>
    <dbReference type="NCBI Taxonomy" id="779"/>
    <lineage>
        <taxon>Bacteria</taxon>
        <taxon>Pseudomonadati</taxon>
        <taxon>Pseudomonadota</taxon>
        <taxon>Alphaproteobacteria</taxon>
        <taxon>Rickettsiales</taxon>
        <taxon>Anaplasmataceae</taxon>
        <taxon>Ehrlichia</taxon>
    </lineage>
</organism>
<proteinExistence type="inferred from homology"/>
<evidence type="ECO:0000250" key="1"/>
<evidence type="ECO:0000255" key="2"/>
<evidence type="ECO:0000305" key="3"/>
<gene>
    <name type="primary">ctaG</name>
</gene>